<feature type="chain" id="PRO_0000153942" description="Thiamine thiazole synthase, chloroplastic">
    <location>
        <begin position="1" status="less than"/>
        <end position="48" status="greater than"/>
    </location>
</feature>
<feature type="binding site" evidence="1">
    <location>
        <position position="18"/>
    </location>
    <ligand>
        <name>substrate</name>
    </ligand>
</feature>
<feature type="binding site" evidence="1">
    <location>
        <position position="40"/>
    </location>
    <ligand>
        <name>substrate</name>
    </ligand>
</feature>
<feature type="non-consecutive residues" evidence="3">
    <location>
        <begin position="11"/>
        <end position="12"/>
    </location>
</feature>
<feature type="non-consecutive residues" evidence="3">
    <location>
        <begin position="27"/>
        <end position="28"/>
    </location>
</feature>
<feature type="non-terminal residue">
    <location>
        <position position="1"/>
    </location>
</feature>
<feature type="non-terminal residue">
    <location>
        <position position="48"/>
    </location>
</feature>
<keyword id="KW-0150">Chloroplast</keyword>
<keyword id="KW-0903">Direct protein sequencing</keyword>
<keyword id="KW-0408">Iron</keyword>
<keyword id="KW-0479">Metal-binding</keyword>
<keyword id="KW-0520">NAD</keyword>
<keyword id="KW-0934">Plastid</keyword>
<keyword id="KW-1185">Reference proteome</keyword>
<keyword id="KW-0784">Thiamine biosynthesis</keyword>
<keyword id="KW-0808">Transferase</keyword>
<protein>
    <recommendedName>
        <fullName>Thiamine thiazole synthase, chloroplastic</fullName>
        <ecNumber>2.4.2.60</ecNumber>
    </recommendedName>
    <alternativeName>
        <fullName>Thiazole biosynthetic enzyme</fullName>
    </alternativeName>
</protein>
<evidence type="ECO:0000250" key="1"/>
<evidence type="ECO:0000255" key="2"/>
<evidence type="ECO:0000305" key="3"/>
<organism>
    <name type="scientific">Populus euphratica</name>
    <name type="common">Euphrates poplar</name>
    <dbReference type="NCBI Taxonomy" id="75702"/>
    <lineage>
        <taxon>Eukaryota</taxon>
        <taxon>Viridiplantae</taxon>
        <taxon>Streptophyta</taxon>
        <taxon>Embryophyta</taxon>
        <taxon>Tracheophyta</taxon>
        <taxon>Spermatophyta</taxon>
        <taxon>Magnoliopsida</taxon>
        <taxon>eudicotyledons</taxon>
        <taxon>Gunneridae</taxon>
        <taxon>Pentapetalae</taxon>
        <taxon>rosids</taxon>
        <taxon>fabids</taxon>
        <taxon>Malpighiales</taxon>
        <taxon>Salicaceae</taxon>
        <taxon>Saliceae</taxon>
        <taxon>Populus</taxon>
    </lineage>
</organism>
<dbReference type="EC" id="2.4.2.60"/>
<dbReference type="SMR" id="P84548"/>
<dbReference type="Proteomes" id="UP000694918">
    <property type="component" value="Unplaced"/>
</dbReference>
<dbReference type="GO" id="GO:0009507">
    <property type="term" value="C:chloroplast"/>
    <property type="evidence" value="ECO:0007669"/>
    <property type="project" value="UniProtKB-SubCell"/>
</dbReference>
<dbReference type="GO" id="GO:0160205">
    <property type="term" value="F:cysteine-dependent adenosine diphosphate thiazole synthase activity"/>
    <property type="evidence" value="ECO:0007669"/>
    <property type="project" value="UniProtKB-EC"/>
</dbReference>
<dbReference type="GO" id="GO:0046872">
    <property type="term" value="F:metal ion binding"/>
    <property type="evidence" value="ECO:0007669"/>
    <property type="project" value="UniProtKB-KW"/>
</dbReference>
<dbReference type="GO" id="GO:0009228">
    <property type="term" value="P:thiamine biosynthetic process"/>
    <property type="evidence" value="ECO:0007669"/>
    <property type="project" value="UniProtKB-KW"/>
</dbReference>
<dbReference type="Gene3D" id="3.50.50.60">
    <property type="entry name" value="FAD/NAD(P)-binding domain"/>
    <property type="match status" value="1"/>
</dbReference>
<dbReference type="InterPro" id="IPR036188">
    <property type="entry name" value="FAD/NAD-bd_sf"/>
</dbReference>
<dbReference type="Pfam" id="PF01946">
    <property type="entry name" value="Thi4"/>
    <property type="match status" value="1"/>
</dbReference>
<proteinExistence type="evidence at protein level"/>
<sequence length="48" mass="5125">FQPIKESIVSRLFNAVAAEDLIVKGGREIVPGMIVTGMEVAEIDGAPR</sequence>
<accession>P84548</accession>
<name>THI4_POPEU</name>
<comment type="function">
    <text evidence="1">Involved in biosynthesis of the thiamine precursor thiazole. Catalyzes the conversion of NAD and glycine to adenosine diphosphate 5-(2-hydroxyethyl)-4-methylthiazole-2-carboxylic acid (ADT), an adenylated thiazole intermediate. The reaction includes an iron-dependent sulfide transfer from a conserved cysteine residue of the protein to a thiazole intermediate. The enzyme can only undergo a single turnover, which suggests it is a suicide enzyme. May have additional roles in adaptation to various stress conditions and in DNA damage tolerance (By similarity).</text>
</comment>
<comment type="catalytic activity">
    <reaction>
        <text>[ADP-thiazole synthase]-L-cysteine + glycine + NAD(+) = [ADP-thiazole synthase]-dehydroalanine + ADP-5-ethyl-4-methylthiazole-2-carboxylate + nicotinamide + 3 H2O + 2 H(+)</text>
        <dbReference type="Rhea" id="RHEA:55708"/>
        <dbReference type="Rhea" id="RHEA-COMP:14264"/>
        <dbReference type="Rhea" id="RHEA-COMP:14265"/>
        <dbReference type="ChEBI" id="CHEBI:15377"/>
        <dbReference type="ChEBI" id="CHEBI:15378"/>
        <dbReference type="ChEBI" id="CHEBI:17154"/>
        <dbReference type="ChEBI" id="CHEBI:29950"/>
        <dbReference type="ChEBI" id="CHEBI:57305"/>
        <dbReference type="ChEBI" id="CHEBI:57540"/>
        <dbReference type="ChEBI" id="CHEBI:90873"/>
        <dbReference type="ChEBI" id="CHEBI:139151"/>
        <dbReference type="EC" id="2.4.2.60"/>
    </reaction>
</comment>
<comment type="cofactor">
    <cofactor evidence="1">
        <name>Fe cation</name>
        <dbReference type="ChEBI" id="CHEBI:24875"/>
    </cofactor>
    <text evidence="1">Binds 1 Fe cation per subunit.</text>
</comment>
<comment type="subunit">
    <text evidence="1">Homooctamer.</text>
</comment>
<comment type="subcellular location">
    <subcellularLocation>
        <location evidence="1">Plastid</location>
        <location evidence="1">Chloroplast</location>
    </subcellularLocation>
</comment>
<comment type="similarity">
    <text evidence="2">Belongs to the THI4 family.</text>
</comment>
<gene>
    <name type="primary">THI1</name>
</gene>
<reference key="1">
    <citation type="journal article" date="2006" name="Ann. Bot.">
        <title>Proteome profiling of Populus euphratica Oliv. upon heat stress.</title>
        <authorList>
            <person name="Ferreira S."/>
            <person name="Hjernoe K."/>
            <person name="Larsen M."/>
            <person name="Wingsle G."/>
            <person name="Larsen P."/>
            <person name="Fey S."/>
            <person name="Roepstorff P."/>
            <person name="Pais M.S."/>
        </authorList>
    </citation>
    <scope>PROTEIN SEQUENCE</scope>
    <source>
        <tissue>Leaf</tissue>
    </source>
</reference>